<feature type="chain" id="PRO_0000094118" description="Serpin B11">
    <location>
        <begin position="1"/>
        <end position="388"/>
    </location>
</feature>
<feature type="region of interest" description="RCL" evidence="1">
    <location>
        <begin position="338"/>
        <end position="362"/>
    </location>
</feature>
<feature type="site" description="Reactive bond">
    <location>
        <begin position="354"/>
        <end position="355"/>
    </location>
</feature>
<feature type="sequence conflict" description="In Ref. 3; AAH10313." evidence="3" ref="3">
    <original>V</original>
    <variation>M</variation>
    <location>
        <position position="82"/>
    </location>
</feature>
<feature type="sequence conflict" description="In Ref. 3; AAH10313." evidence="3" ref="3">
    <original>A</original>
    <variation>T</variation>
    <location>
        <position position="207"/>
    </location>
</feature>
<keyword id="KW-0963">Cytoplasm</keyword>
<keyword id="KW-0646">Protease inhibitor</keyword>
<keyword id="KW-1185">Reference proteome</keyword>
<keyword id="KW-0722">Serine protease inhibitor</keyword>
<accession>Q9CQV3</accession>
<accession>Q91Z12</accession>
<proteinExistence type="evidence at transcript level"/>
<protein>
    <recommendedName>
        <fullName>Serpin B11</fullName>
    </recommendedName>
</protein>
<dbReference type="EMBL" id="AY367772">
    <property type="protein sequence ID" value="AAR89286.1"/>
    <property type="molecule type" value="mRNA"/>
</dbReference>
<dbReference type="EMBL" id="AK009003">
    <property type="protein sequence ID" value="BAB26017.1"/>
    <property type="molecule type" value="mRNA"/>
</dbReference>
<dbReference type="EMBL" id="AK009855">
    <property type="protein sequence ID" value="BAB26546.1"/>
    <property type="molecule type" value="mRNA"/>
</dbReference>
<dbReference type="EMBL" id="BC010313">
    <property type="protein sequence ID" value="AAH10313.1"/>
    <property type="molecule type" value="mRNA"/>
</dbReference>
<dbReference type="CCDS" id="CCDS15218.1"/>
<dbReference type="RefSeq" id="NP_080143.1">
    <property type="nucleotide sequence ID" value="NM_025867.2"/>
</dbReference>
<dbReference type="SMR" id="Q9CQV3"/>
<dbReference type="FunCoup" id="Q9CQV3">
    <property type="interactions" value="111"/>
</dbReference>
<dbReference type="STRING" id="10090.ENSMUSP00000027566"/>
<dbReference type="PhosphoSitePlus" id="Q9CQV3"/>
<dbReference type="jPOST" id="Q9CQV3"/>
<dbReference type="PaxDb" id="10090-ENSMUSP00000027566"/>
<dbReference type="ProteomicsDB" id="258715"/>
<dbReference type="Antibodypedia" id="23130">
    <property type="antibodies" value="123 antibodies from 20 providers"/>
</dbReference>
<dbReference type="DNASU" id="66957"/>
<dbReference type="Ensembl" id="ENSMUST00000027566.3">
    <property type="protein sequence ID" value="ENSMUSP00000027566.3"/>
    <property type="gene ID" value="ENSMUSG00000026327.9"/>
</dbReference>
<dbReference type="GeneID" id="66957"/>
<dbReference type="KEGG" id="mmu:66957"/>
<dbReference type="UCSC" id="uc007chl.1">
    <property type="organism name" value="mouse"/>
</dbReference>
<dbReference type="AGR" id="MGI:1914207"/>
<dbReference type="CTD" id="89778"/>
<dbReference type="MGI" id="MGI:1914207">
    <property type="gene designation" value="Serpinb11"/>
</dbReference>
<dbReference type="VEuPathDB" id="HostDB:ENSMUSG00000026327"/>
<dbReference type="eggNOG" id="KOG2392">
    <property type="taxonomic scope" value="Eukaryota"/>
</dbReference>
<dbReference type="GeneTree" id="ENSGT00940000161560"/>
<dbReference type="HOGENOM" id="CLU_023330_0_2_1"/>
<dbReference type="InParanoid" id="Q9CQV3"/>
<dbReference type="OMA" id="FKATWEH"/>
<dbReference type="OrthoDB" id="671595at2759"/>
<dbReference type="PhylomeDB" id="Q9CQV3"/>
<dbReference type="TreeFam" id="TF352619"/>
<dbReference type="BioGRID-ORCS" id="66957">
    <property type="hits" value="0 hits in 77 CRISPR screens"/>
</dbReference>
<dbReference type="PRO" id="PR:Q9CQV3"/>
<dbReference type="Proteomes" id="UP000000589">
    <property type="component" value="Chromosome 1"/>
</dbReference>
<dbReference type="RNAct" id="Q9CQV3">
    <property type="molecule type" value="protein"/>
</dbReference>
<dbReference type="Bgee" id="ENSMUSG00000026327">
    <property type="expression patterns" value="Expressed in nasal cavity epithelium and 73 other cell types or tissues"/>
</dbReference>
<dbReference type="ExpressionAtlas" id="Q9CQV3">
    <property type="expression patterns" value="baseline and differential"/>
</dbReference>
<dbReference type="GO" id="GO:0005737">
    <property type="term" value="C:cytoplasm"/>
    <property type="evidence" value="ECO:0007669"/>
    <property type="project" value="UniProtKB-SubCell"/>
</dbReference>
<dbReference type="GO" id="GO:0005615">
    <property type="term" value="C:extracellular space"/>
    <property type="evidence" value="ECO:0007669"/>
    <property type="project" value="InterPro"/>
</dbReference>
<dbReference type="GO" id="GO:0004867">
    <property type="term" value="F:serine-type endopeptidase inhibitor activity"/>
    <property type="evidence" value="ECO:0007669"/>
    <property type="project" value="UniProtKB-KW"/>
</dbReference>
<dbReference type="CDD" id="cd19570">
    <property type="entry name" value="serpinB11_epipin"/>
    <property type="match status" value="1"/>
</dbReference>
<dbReference type="FunFam" id="2.30.39.10:FF:000001">
    <property type="entry name" value="Serpin family B member 2"/>
    <property type="match status" value="1"/>
</dbReference>
<dbReference type="Gene3D" id="2.30.39.10">
    <property type="entry name" value="Alpha-1-antitrypsin, domain 1"/>
    <property type="match status" value="1"/>
</dbReference>
<dbReference type="Gene3D" id="3.30.497.10">
    <property type="entry name" value="Antithrombin, subunit I, domain 2"/>
    <property type="match status" value="1"/>
</dbReference>
<dbReference type="InterPro" id="IPR023796">
    <property type="entry name" value="Serpin_dom"/>
</dbReference>
<dbReference type="InterPro" id="IPR000215">
    <property type="entry name" value="Serpin_fam"/>
</dbReference>
<dbReference type="InterPro" id="IPR036186">
    <property type="entry name" value="Serpin_sf"/>
</dbReference>
<dbReference type="InterPro" id="IPR042178">
    <property type="entry name" value="Serpin_sf_1"/>
</dbReference>
<dbReference type="InterPro" id="IPR042185">
    <property type="entry name" value="Serpin_sf_2"/>
</dbReference>
<dbReference type="PANTHER" id="PTHR11461">
    <property type="entry name" value="SERINE PROTEASE INHIBITOR, SERPIN"/>
    <property type="match status" value="1"/>
</dbReference>
<dbReference type="PANTHER" id="PTHR11461:SF199">
    <property type="entry name" value="SERPIN B11"/>
    <property type="match status" value="1"/>
</dbReference>
<dbReference type="Pfam" id="PF00079">
    <property type="entry name" value="Serpin"/>
    <property type="match status" value="1"/>
</dbReference>
<dbReference type="SMART" id="SM00093">
    <property type="entry name" value="SERPIN"/>
    <property type="match status" value="1"/>
</dbReference>
<dbReference type="SUPFAM" id="SSF56574">
    <property type="entry name" value="Serpins"/>
    <property type="match status" value="1"/>
</dbReference>
<reference key="1">
    <citation type="journal article" date="2004" name="Genomics">
        <title>Comparative genomic analysis of the clade B serpin cluster at human chromosome 18q21: amplification within the mouse squamous cell carcinoma antigen gene locus.</title>
        <authorList>
            <person name="Askew D.J."/>
            <person name="Askew Y.S."/>
            <person name="Kato Y."/>
            <person name="Turner R.F."/>
            <person name="Dewar K."/>
            <person name="Lehoczky J."/>
            <person name="Silverman G.A."/>
        </authorList>
    </citation>
    <scope>NUCLEOTIDE SEQUENCE [MRNA]</scope>
    <source>
        <strain>BALB/cJ</strain>
        <tissue>Lung</tissue>
    </source>
</reference>
<reference key="2">
    <citation type="journal article" date="2005" name="Science">
        <title>The transcriptional landscape of the mammalian genome.</title>
        <authorList>
            <person name="Carninci P."/>
            <person name="Kasukawa T."/>
            <person name="Katayama S."/>
            <person name="Gough J."/>
            <person name="Frith M.C."/>
            <person name="Maeda N."/>
            <person name="Oyama R."/>
            <person name="Ravasi T."/>
            <person name="Lenhard B."/>
            <person name="Wells C."/>
            <person name="Kodzius R."/>
            <person name="Shimokawa K."/>
            <person name="Bajic V.B."/>
            <person name="Brenner S.E."/>
            <person name="Batalov S."/>
            <person name="Forrest A.R."/>
            <person name="Zavolan M."/>
            <person name="Davis M.J."/>
            <person name="Wilming L.G."/>
            <person name="Aidinis V."/>
            <person name="Allen J.E."/>
            <person name="Ambesi-Impiombato A."/>
            <person name="Apweiler R."/>
            <person name="Aturaliya R.N."/>
            <person name="Bailey T.L."/>
            <person name="Bansal M."/>
            <person name="Baxter L."/>
            <person name="Beisel K.W."/>
            <person name="Bersano T."/>
            <person name="Bono H."/>
            <person name="Chalk A.M."/>
            <person name="Chiu K.P."/>
            <person name="Choudhary V."/>
            <person name="Christoffels A."/>
            <person name="Clutterbuck D.R."/>
            <person name="Crowe M.L."/>
            <person name="Dalla E."/>
            <person name="Dalrymple B.P."/>
            <person name="de Bono B."/>
            <person name="Della Gatta G."/>
            <person name="di Bernardo D."/>
            <person name="Down T."/>
            <person name="Engstrom P."/>
            <person name="Fagiolini M."/>
            <person name="Faulkner G."/>
            <person name="Fletcher C.F."/>
            <person name="Fukushima T."/>
            <person name="Furuno M."/>
            <person name="Futaki S."/>
            <person name="Gariboldi M."/>
            <person name="Georgii-Hemming P."/>
            <person name="Gingeras T.R."/>
            <person name="Gojobori T."/>
            <person name="Green R.E."/>
            <person name="Gustincich S."/>
            <person name="Harbers M."/>
            <person name="Hayashi Y."/>
            <person name="Hensch T.K."/>
            <person name="Hirokawa N."/>
            <person name="Hill D."/>
            <person name="Huminiecki L."/>
            <person name="Iacono M."/>
            <person name="Ikeo K."/>
            <person name="Iwama A."/>
            <person name="Ishikawa T."/>
            <person name="Jakt M."/>
            <person name="Kanapin A."/>
            <person name="Katoh M."/>
            <person name="Kawasawa Y."/>
            <person name="Kelso J."/>
            <person name="Kitamura H."/>
            <person name="Kitano H."/>
            <person name="Kollias G."/>
            <person name="Krishnan S.P."/>
            <person name="Kruger A."/>
            <person name="Kummerfeld S.K."/>
            <person name="Kurochkin I.V."/>
            <person name="Lareau L.F."/>
            <person name="Lazarevic D."/>
            <person name="Lipovich L."/>
            <person name="Liu J."/>
            <person name="Liuni S."/>
            <person name="McWilliam S."/>
            <person name="Madan Babu M."/>
            <person name="Madera M."/>
            <person name="Marchionni L."/>
            <person name="Matsuda H."/>
            <person name="Matsuzawa S."/>
            <person name="Miki H."/>
            <person name="Mignone F."/>
            <person name="Miyake S."/>
            <person name="Morris K."/>
            <person name="Mottagui-Tabar S."/>
            <person name="Mulder N."/>
            <person name="Nakano N."/>
            <person name="Nakauchi H."/>
            <person name="Ng P."/>
            <person name="Nilsson R."/>
            <person name="Nishiguchi S."/>
            <person name="Nishikawa S."/>
            <person name="Nori F."/>
            <person name="Ohara O."/>
            <person name="Okazaki Y."/>
            <person name="Orlando V."/>
            <person name="Pang K.C."/>
            <person name="Pavan W.J."/>
            <person name="Pavesi G."/>
            <person name="Pesole G."/>
            <person name="Petrovsky N."/>
            <person name="Piazza S."/>
            <person name="Reed J."/>
            <person name="Reid J.F."/>
            <person name="Ring B.Z."/>
            <person name="Ringwald M."/>
            <person name="Rost B."/>
            <person name="Ruan Y."/>
            <person name="Salzberg S.L."/>
            <person name="Sandelin A."/>
            <person name="Schneider C."/>
            <person name="Schoenbach C."/>
            <person name="Sekiguchi K."/>
            <person name="Semple C.A."/>
            <person name="Seno S."/>
            <person name="Sessa L."/>
            <person name="Sheng Y."/>
            <person name="Shibata Y."/>
            <person name="Shimada H."/>
            <person name="Shimada K."/>
            <person name="Silva D."/>
            <person name="Sinclair B."/>
            <person name="Sperling S."/>
            <person name="Stupka E."/>
            <person name="Sugiura K."/>
            <person name="Sultana R."/>
            <person name="Takenaka Y."/>
            <person name="Taki K."/>
            <person name="Tammoja K."/>
            <person name="Tan S.L."/>
            <person name="Tang S."/>
            <person name="Taylor M.S."/>
            <person name="Tegner J."/>
            <person name="Teichmann S.A."/>
            <person name="Ueda H.R."/>
            <person name="van Nimwegen E."/>
            <person name="Verardo R."/>
            <person name="Wei C.L."/>
            <person name="Yagi K."/>
            <person name="Yamanishi H."/>
            <person name="Zabarovsky E."/>
            <person name="Zhu S."/>
            <person name="Zimmer A."/>
            <person name="Hide W."/>
            <person name="Bult C."/>
            <person name="Grimmond S.M."/>
            <person name="Teasdale R.D."/>
            <person name="Liu E.T."/>
            <person name="Brusic V."/>
            <person name="Quackenbush J."/>
            <person name="Wahlestedt C."/>
            <person name="Mattick J.S."/>
            <person name="Hume D.A."/>
            <person name="Kai C."/>
            <person name="Sasaki D."/>
            <person name="Tomaru Y."/>
            <person name="Fukuda S."/>
            <person name="Kanamori-Katayama M."/>
            <person name="Suzuki M."/>
            <person name="Aoki J."/>
            <person name="Arakawa T."/>
            <person name="Iida J."/>
            <person name="Imamura K."/>
            <person name="Itoh M."/>
            <person name="Kato T."/>
            <person name="Kawaji H."/>
            <person name="Kawagashira N."/>
            <person name="Kawashima T."/>
            <person name="Kojima M."/>
            <person name="Kondo S."/>
            <person name="Konno H."/>
            <person name="Nakano K."/>
            <person name="Ninomiya N."/>
            <person name="Nishio T."/>
            <person name="Okada M."/>
            <person name="Plessy C."/>
            <person name="Shibata K."/>
            <person name="Shiraki T."/>
            <person name="Suzuki S."/>
            <person name="Tagami M."/>
            <person name="Waki K."/>
            <person name="Watahiki A."/>
            <person name="Okamura-Oho Y."/>
            <person name="Suzuki H."/>
            <person name="Kawai J."/>
            <person name="Hayashizaki Y."/>
        </authorList>
    </citation>
    <scope>NUCLEOTIDE SEQUENCE [LARGE SCALE MRNA]</scope>
    <source>
        <strain>C57BL/6J</strain>
        <tissue>Tongue</tissue>
    </source>
</reference>
<reference key="3">
    <citation type="journal article" date="2004" name="Genome Res.">
        <title>The status, quality, and expansion of the NIH full-length cDNA project: the Mammalian Gene Collection (MGC).</title>
        <authorList>
            <consortium name="The MGC Project Team"/>
        </authorList>
    </citation>
    <scope>NUCLEOTIDE SEQUENCE [LARGE SCALE MRNA]</scope>
    <source>
        <strain>Czech II</strain>
        <tissue>Mammary tumor</tissue>
    </source>
</reference>
<reference key="4">
    <citation type="journal article" date="2007" name="J. Biol. Chem.">
        <title>SERPINB11 is a new noninhibitory intracellular serpin. Common single nucleotide polymorphisms in the scaffold impair conformational change.</title>
        <authorList>
            <person name="Askew D.J."/>
            <person name="Cataltepe S."/>
            <person name="Kumar V."/>
            <person name="Edwards C."/>
            <person name="Pace S.M."/>
            <person name="Howarth R.N."/>
            <person name="Pak S.C."/>
            <person name="Askew Y.S."/>
            <person name="Bromme D."/>
            <person name="Luke C.J."/>
            <person name="Whisstock J.C."/>
            <person name="Silverman G.A."/>
        </authorList>
    </citation>
    <scope>FUNCTION</scope>
    <scope>TISSUE SPECIFICITY</scope>
    <scope>REACTIVE BOND</scope>
</reference>
<organism>
    <name type="scientific">Mus musculus</name>
    <name type="common">Mouse</name>
    <dbReference type="NCBI Taxonomy" id="10090"/>
    <lineage>
        <taxon>Eukaryota</taxon>
        <taxon>Metazoa</taxon>
        <taxon>Chordata</taxon>
        <taxon>Craniata</taxon>
        <taxon>Vertebrata</taxon>
        <taxon>Euteleostomi</taxon>
        <taxon>Mammalia</taxon>
        <taxon>Eutheria</taxon>
        <taxon>Euarchontoglires</taxon>
        <taxon>Glires</taxon>
        <taxon>Rodentia</taxon>
        <taxon>Myomorpha</taxon>
        <taxon>Muroidea</taxon>
        <taxon>Muridae</taxon>
        <taxon>Murinae</taxon>
        <taxon>Mus</taxon>
        <taxon>Mus</taxon>
    </lineage>
</organism>
<evidence type="ECO:0000250" key="1"/>
<evidence type="ECO:0000269" key="2">
    <source>
    </source>
</evidence>
<evidence type="ECO:0000305" key="3"/>
<gene>
    <name type="primary">Serpinb11</name>
</gene>
<name>SPB11_MOUSE</name>
<comment type="function">
    <text evidence="2">Inhibitor of serine proteases. Has moderate inhibitory activity for trypsin-like peptidases, but also some activity with cysteine peptidases, cathepsin L, K, and V, and the serine peptidase, tryptase gamma.</text>
</comment>
<comment type="subcellular location">
    <subcellularLocation>
        <location evidence="1">Cytoplasm</location>
    </subcellularLocation>
</comment>
<comment type="tissue specificity">
    <text evidence="2">Expressed in eye, lung, lymphocytes, thymus, stomach, uterus, heart, brain, liver, skeletal muscle, and in day 7, 15, and 17 embryos.</text>
</comment>
<comment type="similarity">
    <text evidence="3">Belongs to the serpin family. Ov-serpin subfamily.</text>
</comment>
<sequence length="388" mass="43482">MDPITTASTEFCLDVFKELSSNNVGENIFFSPLTTFYALSMLLLGTRGKSAEQMEKVLHYDSFSGVLKAKTKNSSECSQVGVMHPDFRALISHINQQNSLSVANRIYGTRSISFHKQYVRCCEKLYQAKLQTVDFELSTEETRKSINAWVKNKTNGKITNLFAKGTIDPSSVMVLVSAIYFKGQWQNKFQKRETVKAPFHMGVGKSAVVNMMYQTGTFKLAIIKEPEMQVLELPYANNKLRMIILLPVGTASVSQIEKHLNVKMLREWTNPSNMVEREVDVHIPKFSLSVKYDLNTLLKSLGMRDIFNVANADLSGMSPDKGLYLSKVVHKSYVDVNEEGTEAAAATGESISVKRLPVTVQFTANCPFLFFIWDESGNILFAGKFASP</sequence>